<reference key="1">
    <citation type="journal article" date="2011" name="J. Bacteriol.">
        <title>Comparative genomics of 28 Salmonella enterica isolates: evidence for CRISPR-mediated adaptive sublineage evolution.</title>
        <authorList>
            <person name="Fricke W.F."/>
            <person name="Mammel M.K."/>
            <person name="McDermott P.F."/>
            <person name="Tartera C."/>
            <person name="White D.G."/>
            <person name="Leclerc J.E."/>
            <person name="Ravel J."/>
            <person name="Cebula T.A."/>
        </authorList>
    </citation>
    <scope>NUCLEOTIDE SEQUENCE [LARGE SCALE GENOMIC DNA]</scope>
    <source>
        <strain>CVM19633</strain>
    </source>
</reference>
<comment type="function">
    <text evidence="1">Involved in the import of threonine and serine into the cell, with the concomitant import of a proton (symport system).</text>
</comment>
<comment type="catalytic activity">
    <reaction evidence="1">
        <text>L-threonine(in) + H(+)(in) = L-threonine(out) + H(+)(out)</text>
        <dbReference type="Rhea" id="RHEA:28883"/>
        <dbReference type="ChEBI" id="CHEBI:15378"/>
        <dbReference type="ChEBI" id="CHEBI:57926"/>
    </reaction>
    <physiologicalReaction direction="right-to-left" evidence="1">
        <dbReference type="Rhea" id="RHEA:28885"/>
    </physiologicalReaction>
</comment>
<comment type="catalytic activity">
    <reaction evidence="1">
        <text>L-serine(in) + H(+)(in) = L-serine(out) + H(+)(out)</text>
        <dbReference type="Rhea" id="RHEA:28887"/>
        <dbReference type="ChEBI" id="CHEBI:15378"/>
        <dbReference type="ChEBI" id="CHEBI:33384"/>
    </reaction>
    <physiologicalReaction direction="right-to-left" evidence="1">
        <dbReference type="Rhea" id="RHEA:28889"/>
    </physiologicalReaction>
</comment>
<comment type="subcellular location">
    <subcellularLocation>
        <location evidence="1">Cell inner membrane</location>
        <topology evidence="1">Multi-pass membrane protein</topology>
    </subcellularLocation>
</comment>
<comment type="similarity">
    <text evidence="1">Belongs to the amino acid/polyamine transporter 2 family. SdaC/TdcC subfamily.</text>
</comment>
<dbReference type="EMBL" id="CP001127">
    <property type="protein sequence ID" value="ACF90457.1"/>
    <property type="molecule type" value="Genomic_DNA"/>
</dbReference>
<dbReference type="RefSeq" id="WP_000108129.1">
    <property type="nucleotide sequence ID" value="NC_011094.1"/>
</dbReference>
<dbReference type="KEGG" id="sew:SeSA_A3434"/>
<dbReference type="HOGENOM" id="CLU_052043_1_1_6"/>
<dbReference type="Proteomes" id="UP000001865">
    <property type="component" value="Chromosome"/>
</dbReference>
<dbReference type="GO" id="GO:0005886">
    <property type="term" value="C:plasma membrane"/>
    <property type="evidence" value="ECO:0007669"/>
    <property type="project" value="UniProtKB-SubCell"/>
</dbReference>
<dbReference type="GO" id="GO:0015194">
    <property type="term" value="F:L-serine transmembrane transporter activity"/>
    <property type="evidence" value="ECO:0007669"/>
    <property type="project" value="InterPro"/>
</dbReference>
<dbReference type="GO" id="GO:0015293">
    <property type="term" value="F:symporter activity"/>
    <property type="evidence" value="ECO:0007669"/>
    <property type="project" value="UniProtKB-UniRule"/>
</dbReference>
<dbReference type="GO" id="GO:0015565">
    <property type="term" value="F:threonine efflux transmembrane transporter activity"/>
    <property type="evidence" value="ECO:0007669"/>
    <property type="project" value="InterPro"/>
</dbReference>
<dbReference type="Gene3D" id="1.20.1740.10">
    <property type="entry name" value="Amino acid/polyamine transporter I"/>
    <property type="match status" value="1"/>
</dbReference>
<dbReference type="HAMAP" id="MF_01583">
    <property type="entry name" value="Thr_Ser_transp_TdcC"/>
    <property type="match status" value="1"/>
</dbReference>
<dbReference type="InterPro" id="IPR018227">
    <property type="entry name" value="Amino_acid_transport_2"/>
</dbReference>
<dbReference type="InterPro" id="IPR004694">
    <property type="entry name" value="Hydroxy_aa_transpt"/>
</dbReference>
<dbReference type="InterPro" id="IPR023726">
    <property type="entry name" value="Thr/Ser_transpt_TdcC"/>
</dbReference>
<dbReference type="NCBIfam" id="NF010152">
    <property type="entry name" value="PRK13629.1"/>
    <property type="match status" value="1"/>
</dbReference>
<dbReference type="NCBIfam" id="TIGR00814">
    <property type="entry name" value="stp"/>
    <property type="match status" value="1"/>
</dbReference>
<dbReference type="PANTHER" id="PTHR35334">
    <property type="entry name" value="SERINE TRANSPORTER"/>
    <property type="match status" value="1"/>
</dbReference>
<dbReference type="PANTHER" id="PTHR35334:SF1">
    <property type="entry name" value="THREONINE_SERINE TRANSPORTER TDCC"/>
    <property type="match status" value="1"/>
</dbReference>
<dbReference type="Pfam" id="PF03222">
    <property type="entry name" value="Trp_Tyr_perm"/>
    <property type="match status" value="1"/>
</dbReference>
<feature type="chain" id="PRO_1000147642" description="Threonine/serine transporter TdcC">
    <location>
        <begin position="1"/>
        <end position="443"/>
    </location>
</feature>
<feature type="transmembrane region" description="Helical" evidence="1">
    <location>
        <begin position="22"/>
        <end position="42"/>
    </location>
</feature>
<feature type="transmembrane region" description="Helical" evidence="1">
    <location>
        <begin position="44"/>
        <end position="64"/>
    </location>
</feature>
<feature type="transmembrane region" description="Helical" evidence="1">
    <location>
        <begin position="97"/>
        <end position="117"/>
    </location>
</feature>
<feature type="transmembrane region" description="Helical" evidence="1">
    <location>
        <begin position="140"/>
        <end position="160"/>
    </location>
</feature>
<feature type="transmembrane region" description="Helical" evidence="1">
    <location>
        <begin position="163"/>
        <end position="183"/>
    </location>
</feature>
<feature type="transmembrane region" description="Helical" evidence="1">
    <location>
        <begin position="207"/>
        <end position="227"/>
    </location>
</feature>
<feature type="transmembrane region" description="Helical" evidence="1">
    <location>
        <begin position="259"/>
        <end position="279"/>
    </location>
</feature>
<feature type="transmembrane region" description="Helical" evidence="1">
    <location>
        <begin position="319"/>
        <end position="339"/>
    </location>
</feature>
<feature type="transmembrane region" description="Helical" evidence="1">
    <location>
        <begin position="366"/>
        <end position="386"/>
    </location>
</feature>
<feature type="transmembrane region" description="Helical" evidence="1">
    <location>
        <begin position="389"/>
        <end position="409"/>
    </location>
</feature>
<feature type="transmembrane region" description="Helical" evidence="1">
    <location>
        <begin position="423"/>
        <end position="443"/>
    </location>
</feature>
<protein>
    <recommendedName>
        <fullName evidence="1">Threonine/serine transporter TdcC</fullName>
    </recommendedName>
    <alternativeName>
        <fullName evidence="1">H(+)/threonine-serine symporter</fullName>
    </alternativeName>
</protein>
<organism>
    <name type="scientific">Salmonella schwarzengrund (strain CVM19633)</name>
    <dbReference type="NCBI Taxonomy" id="439843"/>
    <lineage>
        <taxon>Bacteria</taxon>
        <taxon>Pseudomonadati</taxon>
        <taxon>Pseudomonadota</taxon>
        <taxon>Gammaproteobacteria</taxon>
        <taxon>Enterobacterales</taxon>
        <taxon>Enterobacteriaceae</taxon>
        <taxon>Salmonella</taxon>
    </lineage>
</organism>
<sequence>MSTTDSIVSSQAKQSSWRKSDTTWTLGLFGTAIGAGVLFFPIRAGFGGLIPILLMLVLAYPIAFYCHRALARLCLSGSNPSGNITETVEEHFGKTGGVVITFLYFFAICPLLWIYGVTITNTFMTFWENQLQMPALNRGFVALFLLLLMAFVIWFGKDLMVKVMSYLVWPFIASLVLISLSLIPYWNSAVIDQVDLSNIALTGHDGILVTVWLGISIMVFSFNFSPIVSSFVVSKREEYEKEFGREFTERKCSQIISRASMLMVAVVMFFAFSCLFTLSPQNMADAKAQNIPVLSYLANHFASLSGTKSTFATVLEYGASIIALVAIFKSFFGHYLGTLEGLNGLVLKFGYKGDKTKVSMGKLNTISMIFIMGSTWVVAYANPNILDLIEAMGAPIIASLLCLLPMYAIRKAPSLAKYRGRLDNVFVTLIGLLTILNIVYKLF</sequence>
<gene>
    <name evidence="1" type="primary">tdcC</name>
    <name type="ordered locus">SeSA_A3434</name>
</gene>
<name>TDCC_SALSV</name>
<evidence type="ECO:0000255" key="1">
    <source>
        <dbReference type="HAMAP-Rule" id="MF_01583"/>
    </source>
</evidence>
<keyword id="KW-0029">Amino-acid transport</keyword>
<keyword id="KW-0997">Cell inner membrane</keyword>
<keyword id="KW-1003">Cell membrane</keyword>
<keyword id="KW-0472">Membrane</keyword>
<keyword id="KW-0769">Symport</keyword>
<keyword id="KW-0812">Transmembrane</keyword>
<keyword id="KW-1133">Transmembrane helix</keyword>
<keyword id="KW-0813">Transport</keyword>
<accession>B4TVX7</accession>
<proteinExistence type="inferred from homology"/>